<feature type="chain" id="PRO_0000098150" description="Redox-sensitive transcriptional activator SoxR">
    <location>
        <begin position="1"/>
        <end position="154"/>
    </location>
</feature>
<feature type="domain" description="HTH merR-type" evidence="1">
    <location>
        <begin position="11"/>
        <end position="79"/>
    </location>
</feature>
<feature type="DNA-binding region" description="H-T-H motif" evidence="1">
    <location>
        <begin position="14"/>
        <end position="33"/>
    </location>
</feature>
<feature type="region of interest" description="Might be part of a sensor region">
    <location>
        <begin position="119"/>
        <end position="130"/>
    </location>
</feature>
<feature type="region of interest" description="Disordered" evidence="2">
    <location>
        <begin position="135"/>
        <end position="154"/>
    </location>
</feature>
<feature type="binding site">
    <location>
        <position position="119"/>
    </location>
    <ligand>
        <name>[2Fe-2S] cluster</name>
        <dbReference type="ChEBI" id="CHEBI:190135"/>
    </ligand>
</feature>
<feature type="binding site">
    <location>
        <position position="122"/>
    </location>
    <ligand>
        <name>[2Fe-2S] cluster</name>
        <dbReference type="ChEBI" id="CHEBI:190135"/>
    </ligand>
</feature>
<feature type="binding site">
    <location>
        <position position="124"/>
    </location>
    <ligand>
        <name>[2Fe-2S] cluster</name>
        <dbReference type="ChEBI" id="CHEBI:190135"/>
    </ligand>
</feature>
<feature type="binding site">
    <location>
        <position position="130"/>
    </location>
    <ligand>
        <name>[2Fe-2S] cluster</name>
        <dbReference type="ChEBI" id="CHEBI:190135"/>
    </ligand>
</feature>
<feature type="sequence variant" description="In soxR102; constitutively activated allele." evidence="3">
    <original>R</original>
    <variation>C</variation>
    <location>
        <position position="20"/>
    </location>
</feature>
<feature type="helix" evidence="4">
    <location>
        <begin position="14"/>
        <end position="21"/>
    </location>
</feature>
<feature type="helix" evidence="4">
    <location>
        <begin position="25"/>
        <end position="33"/>
    </location>
</feature>
<feature type="turn" evidence="5">
    <location>
        <begin position="43"/>
        <end position="45"/>
    </location>
</feature>
<feature type="strand" evidence="4">
    <location>
        <begin position="47"/>
        <end position="49"/>
    </location>
</feature>
<feature type="helix" evidence="4">
    <location>
        <begin position="53"/>
        <end position="66"/>
    </location>
</feature>
<feature type="helix" evidence="4">
    <location>
        <begin position="70"/>
        <end position="77"/>
    </location>
</feature>
<feature type="helix" evidence="4">
    <location>
        <begin position="88"/>
        <end position="119"/>
    </location>
</feature>
<feature type="turn" evidence="4">
    <location>
        <begin position="120"/>
        <end position="122"/>
    </location>
</feature>
<feature type="helix" evidence="4">
    <location>
        <begin position="127"/>
        <end position="129"/>
    </location>
</feature>
<feature type="turn" evidence="4">
    <location>
        <begin position="131"/>
        <end position="133"/>
    </location>
</feature>
<proteinExistence type="evidence at protein level"/>
<reference key="1">
    <citation type="journal article" date="1991" name="J. Bacteriol.">
        <title>Two divergently transcribed genes, soxR and soxS, control a superoxide response regulon of Escherichia coli.</title>
        <authorList>
            <person name="Wu J."/>
            <person name="Weiss B."/>
        </authorList>
    </citation>
    <scope>NUCLEOTIDE SEQUENCE [GENOMIC DNA]</scope>
    <source>
        <strain>K12</strain>
    </source>
</reference>
<reference key="2">
    <citation type="journal article" date="1991" name="Nucleic Acids Res.">
        <title>Molecular characterization of the soxRS genes of Escherichia coli: two genes control a superoxide stress regulon.</title>
        <authorList>
            <person name="Amabile-Cuevas C.F."/>
            <person name="Demple B."/>
        </authorList>
    </citation>
    <scope>NUCLEOTIDE SEQUENCE [GENOMIC DNA]</scope>
    <source>
        <strain>K12</strain>
    </source>
</reference>
<reference key="3">
    <citation type="journal article" date="1993" name="Nucleic Acids Res.">
        <title>Analysis of the Escherichia coli genome. IV. DNA sequence of the region from 89.2 to 92.8 minutes.</title>
        <authorList>
            <person name="Blattner F.R."/>
            <person name="Burland V.D."/>
            <person name="Plunkett G. III"/>
            <person name="Sofia H.J."/>
            <person name="Daniels D.L."/>
        </authorList>
    </citation>
    <scope>NUCLEOTIDE SEQUENCE [LARGE SCALE GENOMIC DNA]</scope>
    <source>
        <strain>K12 / MG1655 / ATCC 47076</strain>
    </source>
</reference>
<reference key="4">
    <citation type="journal article" date="1997" name="Science">
        <title>The complete genome sequence of Escherichia coli K-12.</title>
        <authorList>
            <person name="Blattner F.R."/>
            <person name="Plunkett G. III"/>
            <person name="Bloch C.A."/>
            <person name="Perna N.T."/>
            <person name="Burland V."/>
            <person name="Riley M."/>
            <person name="Collado-Vides J."/>
            <person name="Glasner J.D."/>
            <person name="Rode C.K."/>
            <person name="Mayhew G.F."/>
            <person name="Gregor J."/>
            <person name="Davis N.W."/>
            <person name="Kirkpatrick H.A."/>
            <person name="Goeden M.A."/>
            <person name="Rose D.J."/>
            <person name="Mau B."/>
            <person name="Shao Y."/>
        </authorList>
    </citation>
    <scope>NUCLEOTIDE SEQUENCE [LARGE SCALE GENOMIC DNA]</scope>
    <source>
        <strain>K12 / MG1655 / ATCC 47076</strain>
    </source>
</reference>
<reference key="5">
    <citation type="journal article" date="2006" name="Mol. Syst. Biol.">
        <title>Highly accurate genome sequences of Escherichia coli K-12 strains MG1655 and W3110.</title>
        <authorList>
            <person name="Hayashi K."/>
            <person name="Morooka N."/>
            <person name="Yamamoto Y."/>
            <person name="Fujita K."/>
            <person name="Isono K."/>
            <person name="Choi S."/>
            <person name="Ohtsubo E."/>
            <person name="Baba T."/>
            <person name="Wanner B.L."/>
            <person name="Mori H."/>
            <person name="Horiuchi T."/>
        </authorList>
    </citation>
    <scope>NUCLEOTIDE SEQUENCE [LARGE SCALE GENOMIC DNA]</scope>
    <source>
        <strain>K12 / W3110 / ATCC 27325 / DSM 5911</strain>
    </source>
</reference>
<reference key="6">
    <citation type="journal article" date="1994" name="EMBO J.">
        <title>An iron-sulfur center essential for transcriptional activation by the redox-sensing SoxR protein.</title>
        <authorList>
            <person name="Hidalgo E."/>
            <person name="Demple B."/>
        </authorList>
    </citation>
    <scope>IRON-SULFUR</scope>
</reference>
<reference key="7">
    <citation type="journal article" date="1995" name="J. Biol. Chem.">
        <title>Binuclear [2Fe-2S] clusters in the Escherichia coli SoxR protein and role of the metal centers in transcription.</title>
        <authorList>
            <person name="Hidalgo E."/>
            <person name="Bollinger J.M. Jr."/>
            <person name="Bradley T.M."/>
            <person name="Walsh C.T."/>
            <person name="Demple B."/>
        </authorList>
    </citation>
    <scope>EPR SPECTROSCOPY OF IRON-SULFUR CLUSTERS</scope>
</reference>
<reference key="8">
    <citation type="journal article" date="1996" name="J. Biol. Chem.">
        <title>The redox state of the [2Fe-2S] clusters in SoxR protein regulates its activity as a transcription factor.</title>
        <authorList>
            <person name="Ding H."/>
            <person name="Hidalgo E."/>
            <person name="Demple B."/>
        </authorList>
    </citation>
    <scope>REDOX TITRATION</scope>
</reference>
<reference key="9">
    <citation type="journal article" date="1996" name="J. Biol. Chem.">
        <title>Activation of SoxR-dependent transcription in vitro by noncatalytic or NifS-mediated assembly of [2Fe-2S] clusters into apo-SoxR.</title>
        <authorList>
            <person name="Hidalgo E."/>
            <person name="Demple B."/>
        </authorList>
    </citation>
    <scope>IRON-SULFUR CLUSTER ASSEMBLY</scope>
    <scope>EPR SPECTROSCOPY</scope>
</reference>
<reference key="10">
    <citation type="journal article" date="1997" name="Cell">
        <title>Redox signal transduction: mutations shifting [2Fe-2S] centers of the SoxR sensor-regulator to the oxidized form.</title>
        <authorList>
            <person name="Hidalgo E."/>
            <person name="Ding H."/>
            <person name="Demple B."/>
        </authorList>
    </citation>
    <scope>MUTAGENESIS</scope>
    <scope>EPR SPECTROSCOPY</scope>
    <scope>REDOX TITRATION</scope>
</reference>
<reference key="11">
    <citation type="journal article" date="1997" name="Nucleic Acids Res.">
        <title>Cysteine-to-alanine replacements in the Escherichia coli SoxR protein and the role of the [2Fe-2S] centers in transcriptional activation.</title>
        <authorList>
            <person name="Bradley T.M."/>
            <person name="Hidalgo E."/>
            <person name="Leautaud V."/>
            <person name="Ding H."/>
            <person name="Demple B."/>
        </authorList>
    </citation>
    <scope>MUTAGENESIS OF CYSTEINE RESIDUES</scope>
    <scope>EPR SPECTROSCOPY</scope>
</reference>
<reference key="12">
    <citation type="journal article" date="1997" name="Trends Biochem. Sci.">
        <title>Redox signal transduction via iron-sulfur clusters in the SoxR transcription activator.</title>
        <authorList>
            <person name="Hidalgo E."/>
            <person name="Ding H."/>
            <person name="Demple B."/>
        </authorList>
    </citation>
    <scope>REVIEW</scope>
</reference>
<reference key="13">
    <citation type="journal article" date="1999" name="Biochem. Soc. Symp.">
        <title>Transcriptional regulation via redox-sensitive iron-sulphur centres in an oxidative stress response.</title>
        <authorList>
            <person name="Demple B."/>
            <person name="Hidalgo E."/>
            <person name="Ding H."/>
        </authorList>
    </citation>
    <scope>REVIEW</scope>
</reference>
<reference key="14">
    <citation type="journal article" date="2003" name="J. Bacteriol.">
        <title>Transcription-defective soxR mutants of Escherichia coli: isolation and in vivo characterization.</title>
        <authorList>
            <person name="Chander M."/>
            <person name="Raducha-Grace L."/>
            <person name="Demple B."/>
        </authorList>
    </citation>
    <scope>MUTAGENESIS</scope>
</reference>
<reference key="15">
    <citation type="journal article" date="1994" name="Nucleic Acids Res.">
        <title>A cluster of constitutive mutations affecting the C-terminus of the redox-sensitive SoxR transcriptional activator.</title>
        <authorList>
            <person name="Nunoshiba T."/>
            <person name="Demple B."/>
        </authorList>
    </citation>
    <scope>VARIANT SOXR102 CYS-20</scope>
</reference>
<organism>
    <name type="scientific">Escherichia coli (strain K12)</name>
    <dbReference type="NCBI Taxonomy" id="83333"/>
    <lineage>
        <taxon>Bacteria</taxon>
        <taxon>Pseudomonadati</taxon>
        <taxon>Pseudomonadota</taxon>
        <taxon>Gammaproteobacteria</taxon>
        <taxon>Enterobacterales</taxon>
        <taxon>Enterobacteriaceae</taxon>
        <taxon>Escherichia</taxon>
    </lineage>
</organism>
<accession>P0ACS2</accession>
<accession>P22538</accession>
<accession>Q2M6P1</accession>
<accession>Q53442</accession>
<evidence type="ECO:0000255" key="1">
    <source>
        <dbReference type="PROSITE-ProRule" id="PRU00254"/>
    </source>
</evidence>
<evidence type="ECO:0000256" key="2">
    <source>
        <dbReference type="SAM" id="MobiDB-lite"/>
    </source>
</evidence>
<evidence type="ECO:0000269" key="3">
    <source>
    </source>
</evidence>
<evidence type="ECO:0007829" key="4">
    <source>
        <dbReference type="PDB" id="2ZHG"/>
    </source>
</evidence>
<evidence type="ECO:0007829" key="5">
    <source>
        <dbReference type="PDB" id="2ZHH"/>
    </source>
</evidence>
<comment type="function">
    <text>Activates the transcription of the soxS gene which itself controls the superoxide response regulon. SoxR contains a 2Fe-2S iron-sulfur cluster that may act as a redox sensor system that recognizes superoxide. The variable redox state of the Fe-S cluster is employed in vivo to modulate the transcriptional activity of SoxR in response to specific types of oxidative stress. Upon reduction of 2Fe-2S cluster, SoxR reversibly loses its transcriptional activity, but retains its DNA binding affinity.</text>
</comment>
<comment type="biophysicochemical properties">
    <redoxPotential>
        <text>E(0) is -285 mV.</text>
    </redoxPotential>
</comment>
<comment type="subunit">
    <text>Homodimer.</text>
</comment>
<sequence length="154" mass="17150">MEKKLPRIKALLTPGEVAKRSGVAVSALHFYESKGLITSIRNSGNQRRYKRDVLRYVAIIKIAQRIGIPLATIGEAFGVLPEGHTLSAKEWKQLSSQWREELDRRIHTLVALRDELDGCIGCGCLSRSDCPLRNPGDRLGEEGTGARLLEDEQN</sequence>
<name>SOXR_ECOLI</name>
<keyword id="KW-0001">2Fe-2S</keyword>
<keyword id="KW-0002">3D-structure</keyword>
<keyword id="KW-0010">Activator</keyword>
<keyword id="KW-0238">DNA-binding</keyword>
<keyword id="KW-0408">Iron</keyword>
<keyword id="KW-0411">Iron-sulfur</keyword>
<keyword id="KW-0479">Metal-binding</keyword>
<keyword id="KW-1185">Reference proteome</keyword>
<keyword id="KW-0804">Transcription</keyword>
<keyword id="KW-0805">Transcription regulation</keyword>
<protein>
    <recommendedName>
        <fullName>Redox-sensitive transcriptional activator SoxR</fullName>
    </recommendedName>
</protein>
<dbReference type="EMBL" id="M60111">
    <property type="protein sequence ID" value="AAA24641.1"/>
    <property type="molecule type" value="Genomic_DNA"/>
</dbReference>
<dbReference type="EMBL" id="X59593">
    <property type="protein sequence ID" value="CAA42162.1"/>
    <property type="molecule type" value="Genomic_DNA"/>
</dbReference>
<dbReference type="EMBL" id="U00006">
    <property type="protein sequence ID" value="AAC43157.1"/>
    <property type="molecule type" value="Genomic_DNA"/>
</dbReference>
<dbReference type="EMBL" id="U00096">
    <property type="protein sequence ID" value="AAC77033.1"/>
    <property type="molecule type" value="Genomic_DNA"/>
</dbReference>
<dbReference type="EMBL" id="AP009048">
    <property type="protein sequence ID" value="BAE78065.1"/>
    <property type="molecule type" value="Genomic_DNA"/>
</dbReference>
<dbReference type="EMBL" id="S72675">
    <property type="protein sequence ID" value="AAB31680.1"/>
    <property type="molecule type" value="Genomic_DNA"/>
</dbReference>
<dbReference type="PIR" id="JS0577">
    <property type="entry name" value="JS0577"/>
</dbReference>
<dbReference type="RefSeq" id="NP_418487.1">
    <property type="nucleotide sequence ID" value="NC_000913.3"/>
</dbReference>
<dbReference type="RefSeq" id="WP_000412428.1">
    <property type="nucleotide sequence ID" value="NZ_STEB01000014.1"/>
</dbReference>
<dbReference type="PDB" id="2ZHG">
    <property type="method" value="X-ray"/>
    <property type="resolution" value="2.80 A"/>
    <property type="chains" value="A=1-154"/>
</dbReference>
<dbReference type="PDB" id="2ZHH">
    <property type="method" value="X-ray"/>
    <property type="resolution" value="3.20 A"/>
    <property type="chains" value="A=1-154"/>
</dbReference>
<dbReference type="PDBsum" id="2ZHG"/>
<dbReference type="PDBsum" id="2ZHH"/>
<dbReference type="SMR" id="P0ACS2"/>
<dbReference type="BioGRID" id="4259601">
    <property type="interactions" value="152"/>
</dbReference>
<dbReference type="BioGRID" id="852860">
    <property type="interactions" value="1"/>
</dbReference>
<dbReference type="DIP" id="DIP-29848N"/>
<dbReference type="FunCoup" id="P0ACS2">
    <property type="interactions" value="125"/>
</dbReference>
<dbReference type="IntAct" id="P0ACS2">
    <property type="interactions" value="7"/>
</dbReference>
<dbReference type="STRING" id="511145.b4063"/>
<dbReference type="PaxDb" id="511145-b4063"/>
<dbReference type="EnsemblBacteria" id="AAC77033">
    <property type="protein sequence ID" value="AAC77033"/>
    <property type="gene ID" value="b4063"/>
</dbReference>
<dbReference type="GeneID" id="86944605"/>
<dbReference type="GeneID" id="948566"/>
<dbReference type="KEGG" id="ecj:JW4024"/>
<dbReference type="KEGG" id="eco:b4063"/>
<dbReference type="KEGG" id="ecoc:C3026_21955"/>
<dbReference type="PATRIC" id="fig|1411691.4.peg.2642"/>
<dbReference type="EchoBASE" id="EB0950"/>
<dbReference type="eggNOG" id="COG0789">
    <property type="taxonomic scope" value="Bacteria"/>
</dbReference>
<dbReference type="HOGENOM" id="CLU_060077_5_1_6"/>
<dbReference type="InParanoid" id="P0ACS2"/>
<dbReference type="OMA" id="CLSIESC"/>
<dbReference type="OrthoDB" id="9802944at2"/>
<dbReference type="PhylomeDB" id="P0ACS2"/>
<dbReference type="BioCyc" id="EcoCyc:PD04132"/>
<dbReference type="EvolutionaryTrace" id="P0ACS2"/>
<dbReference type="PRO" id="PR:P0ACS2"/>
<dbReference type="Proteomes" id="UP000000625">
    <property type="component" value="Chromosome"/>
</dbReference>
<dbReference type="GO" id="GO:0005737">
    <property type="term" value="C:cytoplasm"/>
    <property type="evidence" value="ECO:0000314"/>
    <property type="project" value="EcoCyc"/>
</dbReference>
<dbReference type="GO" id="GO:0051537">
    <property type="term" value="F:2 iron, 2 sulfur cluster binding"/>
    <property type="evidence" value="ECO:0000314"/>
    <property type="project" value="EcoCyc"/>
</dbReference>
<dbReference type="GO" id="GO:0003677">
    <property type="term" value="F:DNA binding"/>
    <property type="evidence" value="ECO:0007669"/>
    <property type="project" value="UniProtKB-KW"/>
</dbReference>
<dbReference type="GO" id="GO:0003700">
    <property type="term" value="F:DNA-binding transcription factor activity"/>
    <property type="evidence" value="ECO:0000318"/>
    <property type="project" value="GO_Central"/>
</dbReference>
<dbReference type="GO" id="GO:0046872">
    <property type="term" value="F:metal ion binding"/>
    <property type="evidence" value="ECO:0007669"/>
    <property type="project" value="UniProtKB-KW"/>
</dbReference>
<dbReference type="GO" id="GO:0006355">
    <property type="term" value="P:regulation of DNA-templated transcription"/>
    <property type="evidence" value="ECO:0000318"/>
    <property type="project" value="GO_Central"/>
</dbReference>
<dbReference type="GO" id="GO:0006979">
    <property type="term" value="P:response to oxidative stress"/>
    <property type="evidence" value="ECO:0000315"/>
    <property type="project" value="EcoCyc"/>
</dbReference>
<dbReference type="CDD" id="cd01110">
    <property type="entry name" value="HTH_SoxR"/>
    <property type="match status" value="1"/>
</dbReference>
<dbReference type="FunFam" id="1.10.1660.10:FF:000002">
    <property type="entry name" value="Redox-sensitive transcriptional activator SoxR"/>
    <property type="match status" value="1"/>
</dbReference>
<dbReference type="Gene3D" id="1.10.1660.10">
    <property type="match status" value="1"/>
</dbReference>
<dbReference type="InterPro" id="IPR009061">
    <property type="entry name" value="DNA-bd_dom_put_sf"/>
</dbReference>
<dbReference type="InterPro" id="IPR000551">
    <property type="entry name" value="MerR-type_HTH_dom"/>
</dbReference>
<dbReference type="InterPro" id="IPR047057">
    <property type="entry name" value="MerR_fam"/>
</dbReference>
<dbReference type="InterPro" id="IPR010211">
    <property type="entry name" value="Redox-sen_tscrpt-act_SoxR"/>
</dbReference>
<dbReference type="InterPro" id="IPR015358">
    <property type="entry name" value="Tscrpt_reg_MerR_DNA-bd"/>
</dbReference>
<dbReference type="NCBIfam" id="TIGR01950">
    <property type="entry name" value="SoxR"/>
    <property type="match status" value="1"/>
</dbReference>
<dbReference type="PANTHER" id="PTHR30204">
    <property type="entry name" value="REDOX-CYCLING DRUG-SENSING TRANSCRIPTIONAL ACTIVATOR SOXR"/>
    <property type="match status" value="1"/>
</dbReference>
<dbReference type="PANTHER" id="PTHR30204:SF0">
    <property type="entry name" value="REDOX-SENSITIVE TRANSCRIPTIONAL ACTIVATOR SOXR"/>
    <property type="match status" value="1"/>
</dbReference>
<dbReference type="Pfam" id="PF00376">
    <property type="entry name" value="MerR"/>
    <property type="match status" value="1"/>
</dbReference>
<dbReference type="Pfam" id="PF09278">
    <property type="entry name" value="MerR-DNA-bind"/>
    <property type="match status" value="1"/>
</dbReference>
<dbReference type="PRINTS" id="PR00040">
    <property type="entry name" value="HTHMERR"/>
</dbReference>
<dbReference type="SMART" id="SM00422">
    <property type="entry name" value="HTH_MERR"/>
    <property type="match status" value="1"/>
</dbReference>
<dbReference type="SUPFAM" id="SSF46955">
    <property type="entry name" value="Putative DNA-binding domain"/>
    <property type="match status" value="1"/>
</dbReference>
<dbReference type="PROSITE" id="PS00552">
    <property type="entry name" value="HTH_MERR_1"/>
    <property type="match status" value="1"/>
</dbReference>
<dbReference type="PROSITE" id="PS50937">
    <property type="entry name" value="HTH_MERR_2"/>
    <property type="match status" value="1"/>
</dbReference>
<gene>
    <name type="primary">soxR</name>
    <name type="synonym">marC</name>
    <name type="ordered locus">b4063</name>
    <name type="ordered locus">JW4024</name>
</gene>